<name>RNE_BUCBP</name>
<evidence type="ECO:0000250" key="1"/>
<evidence type="ECO:0000250" key="2">
    <source>
        <dbReference type="UniProtKB" id="P21513"/>
    </source>
</evidence>
<evidence type="ECO:0000255" key="3">
    <source>
        <dbReference type="PROSITE-ProRule" id="PRU00180"/>
    </source>
</evidence>
<evidence type="ECO:0000305" key="4"/>
<dbReference type="EC" id="3.1.26.12"/>
<dbReference type="EMBL" id="AE016826">
    <property type="protein sequence ID" value="AAO27039.1"/>
    <property type="molecule type" value="Genomic_DNA"/>
</dbReference>
<dbReference type="SMR" id="Q89AH3"/>
<dbReference type="STRING" id="224915.bbp_317"/>
<dbReference type="KEGG" id="bab:bbp_317"/>
<dbReference type="eggNOG" id="COG1530">
    <property type="taxonomic scope" value="Bacteria"/>
</dbReference>
<dbReference type="HOGENOM" id="CLU_003468_5_3_6"/>
<dbReference type="OrthoDB" id="9804278at2"/>
<dbReference type="Proteomes" id="UP000000601">
    <property type="component" value="Chromosome"/>
</dbReference>
<dbReference type="GO" id="GO:0005737">
    <property type="term" value="C:cytoplasm"/>
    <property type="evidence" value="ECO:0007669"/>
    <property type="project" value="UniProtKB-SubCell"/>
</dbReference>
<dbReference type="GO" id="GO:0005886">
    <property type="term" value="C:plasma membrane"/>
    <property type="evidence" value="ECO:0007669"/>
    <property type="project" value="UniProtKB-SubCell"/>
</dbReference>
<dbReference type="GO" id="GO:0004519">
    <property type="term" value="F:endonuclease activity"/>
    <property type="evidence" value="ECO:0007669"/>
    <property type="project" value="UniProtKB-KW"/>
</dbReference>
<dbReference type="GO" id="GO:0046872">
    <property type="term" value="F:metal ion binding"/>
    <property type="evidence" value="ECO:0007669"/>
    <property type="project" value="UniProtKB-KW"/>
</dbReference>
<dbReference type="GO" id="GO:0004540">
    <property type="term" value="F:RNA nuclease activity"/>
    <property type="evidence" value="ECO:0007669"/>
    <property type="project" value="InterPro"/>
</dbReference>
<dbReference type="GO" id="GO:0019843">
    <property type="term" value="F:rRNA binding"/>
    <property type="evidence" value="ECO:0007669"/>
    <property type="project" value="UniProtKB-KW"/>
</dbReference>
<dbReference type="GO" id="GO:0000049">
    <property type="term" value="F:tRNA binding"/>
    <property type="evidence" value="ECO:0007669"/>
    <property type="project" value="UniProtKB-KW"/>
</dbReference>
<dbReference type="GO" id="GO:0006364">
    <property type="term" value="P:rRNA processing"/>
    <property type="evidence" value="ECO:0007669"/>
    <property type="project" value="UniProtKB-KW"/>
</dbReference>
<dbReference type="GO" id="GO:0008033">
    <property type="term" value="P:tRNA processing"/>
    <property type="evidence" value="ECO:0007669"/>
    <property type="project" value="UniProtKB-KW"/>
</dbReference>
<dbReference type="CDD" id="cd04453">
    <property type="entry name" value="S1_RNase_E"/>
    <property type="match status" value="1"/>
</dbReference>
<dbReference type="Gene3D" id="2.40.50.140">
    <property type="entry name" value="Nucleic acid-binding proteins"/>
    <property type="match status" value="1"/>
</dbReference>
<dbReference type="InterPro" id="IPR012340">
    <property type="entry name" value="NA-bd_OB-fold"/>
</dbReference>
<dbReference type="InterPro" id="IPR019307">
    <property type="entry name" value="RNA-bd_AU-1/RNase_E/G"/>
</dbReference>
<dbReference type="InterPro" id="IPR004659">
    <property type="entry name" value="RNase_E/G"/>
</dbReference>
<dbReference type="InterPro" id="IPR003029">
    <property type="entry name" value="S1_domain"/>
</dbReference>
<dbReference type="NCBIfam" id="TIGR00757">
    <property type="entry name" value="RNaseEG"/>
    <property type="match status" value="1"/>
</dbReference>
<dbReference type="PANTHER" id="PTHR30001">
    <property type="entry name" value="RIBONUCLEASE"/>
    <property type="match status" value="1"/>
</dbReference>
<dbReference type="PANTHER" id="PTHR30001:SF1">
    <property type="entry name" value="RIBONUCLEASE E_G-LIKE PROTEIN, CHLOROPLASTIC"/>
    <property type="match status" value="1"/>
</dbReference>
<dbReference type="Pfam" id="PF10150">
    <property type="entry name" value="RNase_E_G"/>
    <property type="match status" value="1"/>
</dbReference>
<dbReference type="Pfam" id="PF00575">
    <property type="entry name" value="S1"/>
    <property type="match status" value="1"/>
</dbReference>
<dbReference type="SMART" id="SM00316">
    <property type="entry name" value="S1"/>
    <property type="match status" value="1"/>
</dbReference>
<dbReference type="SUPFAM" id="SSF50249">
    <property type="entry name" value="Nucleic acid-binding proteins"/>
    <property type="match status" value="1"/>
</dbReference>
<dbReference type="PROSITE" id="PS50126">
    <property type="entry name" value="S1"/>
    <property type="match status" value="1"/>
</dbReference>
<accession>Q89AH3</accession>
<feature type="chain" id="PRO_0000097372" description="Putative ribonuclease E">
    <location>
        <begin position="1"/>
        <end position="410"/>
    </location>
</feature>
<feature type="domain" description="S1 motif" evidence="3">
    <location>
        <begin position="39"/>
        <end position="119"/>
    </location>
</feature>
<feature type="binding site" evidence="2">
    <location>
        <position position="303"/>
    </location>
    <ligand>
        <name>Mg(2+)</name>
        <dbReference type="ChEBI" id="CHEBI:18420"/>
        <note>catalytic</note>
    </ligand>
</feature>
<feature type="binding site" evidence="2">
    <location>
        <position position="346"/>
    </location>
    <ligand>
        <name>Mg(2+)</name>
        <dbReference type="ChEBI" id="CHEBI:18420"/>
        <note>catalytic</note>
    </ligand>
</feature>
<protein>
    <recommendedName>
        <fullName>Putative ribonuclease E</fullName>
        <shortName>RNase E</shortName>
        <ecNumber>3.1.26.12</ecNumber>
    </recommendedName>
</protein>
<sequence length="410" mass="47312">MRRMLINAIEIKKLRIALIDGQQLYDLNVENIDKKQRKSNIYKGKIVRIEPSLEAAFVDYGEKKNGFLPLKEISRNYFPNNCSNYRHLHIKNILKEGQECIVQIDKEERGTKGALLTTFISLAGNYLVLMPNCPHLEGISRKIEGIDRFHLKKIISMLMVPENMGIIIRTSGVGRSIETLQLDLNFRVKNWYTIKKSAEINTAPCLIHKESNIVIRTLRDYLKKDIQEIIVDNPEILELARDYMFNMNCSYFEKKIKLYTGSDPLFSYYKIESQINALLRRIVKLPSGGSIIIDYTEALTAIDINSSQSTKGVNIEETAFNTNYEAVREIARQLRLRDLGGLIVIDFIDMSVLKHQKMIELHLHQVLQKDRARVQVGSISQFGLLEMSRQCLGSPLKKINHNYLFEMQKC</sequence>
<keyword id="KW-0997">Cell inner membrane</keyword>
<keyword id="KW-1003">Cell membrane</keyword>
<keyword id="KW-0963">Cytoplasm</keyword>
<keyword id="KW-0255">Endonuclease</keyword>
<keyword id="KW-0378">Hydrolase</keyword>
<keyword id="KW-0460">Magnesium</keyword>
<keyword id="KW-0472">Membrane</keyword>
<keyword id="KW-0479">Metal-binding</keyword>
<keyword id="KW-0540">Nuclease</keyword>
<keyword id="KW-1185">Reference proteome</keyword>
<keyword id="KW-0694">RNA-binding</keyword>
<keyword id="KW-0698">rRNA processing</keyword>
<keyword id="KW-0699">rRNA-binding</keyword>
<keyword id="KW-0819">tRNA processing</keyword>
<keyword id="KW-0820">tRNA-binding</keyword>
<reference key="1">
    <citation type="journal article" date="2003" name="Proc. Natl. Acad. Sci. U.S.A.">
        <title>Reductive genome evolution in Buchnera aphidicola.</title>
        <authorList>
            <person name="van Ham R.C.H.J."/>
            <person name="Kamerbeek J."/>
            <person name="Palacios C."/>
            <person name="Rausell C."/>
            <person name="Abascal F."/>
            <person name="Bastolla U."/>
            <person name="Fernandez J.M."/>
            <person name="Jimenez L."/>
            <person name="Postigo M."/>
            <person name="Silva F.J."/>
            <person name="Tamames J."/>
            <person name="Viguera E."/>
            <person name="Latorre A."/>
            <person name="Valencia A."/>
            <person name="Moran F."/>
            <person name="Moya A."/>
        </authorList>
    </citation>
    <scope>NUCLEOTIDE SEQUENCE [LARGE SCALE GENOMIC DNA]</scope>
    <source>
        <strain>Bp</strain>
    </source>
</reference>
<gene>
    <name type="primary">rne</name>
    <name type="ordered locus">bbp_317</name>
</gene>
<comment type="function">
    <text evidence="2">Endoribonuclease that plays a central role in RNA processing and decay. Required for the maturation of 5S and 16S rRNAs and the majority of tRNAs. Also involved in the degradation of most mRNAs (By similarity).</text>
</comment>
<comment type="catalytic activity">
    <reaction>
        <text>Endonucleolytic cleavage of single-stranded RNA in A- and U-rich regions.</text>
        <dbReference type="EC" id="3.1.26.12"/>
    </reaction>
</comment>
<comment type="cofactor">
    <cofactor evidence="2">
        <name>Mg(2+)</name>
        <dbReference type="ChEBI" id="CHEBI:18420"/>
    </cofactor>
    <text evidence="2">Binds 1 Mg(2+) ion per subunit.</text>
</comment>
<comment type="subunit">
    <text evidence="2">Component of the RNA degradosome, which is a multiprotein complex involved in RNA processing and mRNA degradation. Within the RNA degradosome, RNase E assembles into a homotetramer formed by a dimer of dimers (By similarity).</text>
</comment>
<comment type="subcellular location">
    <subcellularLocation>
        <location evidence="2">Cytoplasm</location>
    </subcellularLocation>
    <subcellularLocation>
        <location evidence="2">Cell inner membrane</location>
        <topology evidence="1">Peripheral membrane protein</topology>
        <orientation evidence="1">Cytoplasmic side</orientation>
    </subcellularLocation>
</comment>
<comment type="similarity">
    <text evidence="4">Belongs to the RNase E/G family. RNase E subfamily.</text>
</comment>
<comment type="caution">
    <text evidence="4">This sequence is much shorter than orthologs.</text>
</comment>
<proteinExistence type="inferred from homology"/>
<organism>
    <name type="scientific">Buchnera aphidicola subsp. Baizongia pistaciae (strain Bp)</name>
    <dbReference type="NCBI Taxonomy" id="224915"/>
    <lineage>
        <taxon>Bacteria</taxon>
        <taxon>Pseudomonadati</taxon>
        <taxon>Pseudomonadota</taxon>
        <taxon>Gammaproteobacteria</taxon>
        <taxon>Enterobacterales</taxon>
        <taxon>Erwiniaceae</taxon>
        <taxon>Buchnera</taxon>
    </lineage>
</organism>